<feature type="chain" id="PRO_0000090561" description="L-rhamnose isomerase">
    <location>
        <begin position="1"/>
        <end position="417"/>
    </location>
</feature>
<feature type="binding site" evidence="1">
    <location>
        <position position="260"/>
    </location>
    <ligand>
        <name>Mn(2+)</name>
        <dbReference type="ChEBI" id="CHEBI:29035"/>
    </ligand>
</feature>
<feature type="binding site" evidence="1">
    <location>
        <position position="292"/>
    </location>
    <ligand>
        <name>Mn(2+)</name>
        <dbReference type="ChEBI" id="CHEBI:29035"/>
    </ligand>
</feature>
<feature type="binding site" evidence="1">
    <location>
        <position position="294"/>
    </location>
    <ligand>
        <name>Mn(2+)</name>
        <dbReference type="ChEBI" id="CHEBI:29035"/>
    </ligand>
</feature>
<evidence type="ECO:0000255" key="1">
    <source>
        <dbReference type="HAMAP-Rule" id="MF_00541"/>
    </source>
</evidence>
<reference key="1">
    <citation type="journal article" date="2004" name="Nat. Biotechnol.">
        <title>The genome sequence of the capnophilic rumen bacterium Mannheimia succiniciproducens.</title>
        <authorList>
            <person name="Hong S.H."/>
            <person name="Kim J.S."/>
            <person name="Lee S.Y."/>
            <person name="In Y.H."/>
            <person name="Choi S.S."/>
            <person name="Rih J.-K."/>
            <person name="Kim C.H."/>
            <person name="Jeong H."/>
            <person name="Hur C.G."/>
            <person name="Kim J.J."/>
        </authorList>
    </citation>
    <scope>NUCLEOTIDE SEQUENCE [LARGE SCALE GENOMIC DNA]</scope>
    <source>
        <strain>KCTC 0769BP / MBEL55E</strain>
    </source>
</reference>
<name>RHAA_MANSM</name>
<dbReference type="EC" id="5.3.1.14" evidence="1"/>
<dbReference type="EMBL" id="AE016827">
    <property type="protein sequence ID" value="AAU38935.1"/>
    <property type="molecule type" value="Genomic_DNA"/>
</dbReference>
<dbReference type="RefSeq" id="WP_011201473.1">
    <property type="nucleotide sequence ID" value="NC_006300.1"/>
</dbReference>
<dbReference type="SMR" id="Q65Q25"/>
<dbReference type="STRING" id="221988.MS2328"/>
<dbReference type="KEGG" id="msu:MS2328"/>
<dbReference type="eggNOG" id="COG4806">
    <property type="taxonomic scope" value="Bacteria"/>
</dbReference>
<dbReference type="HOGENOM" id="CLU_052790_0_0_6"/>
<dbReference type="OrthoDB" id="9766697at2"/>
<dbReference type="UniPathway" id="UPA00541">
    <property type="reaction ID" value="UER00601"/>
</dbReference>
<dbReference type="Proteomes" id="UP000000607">
    <property type="component" value="Chromosome"/>
</dbReference>
<dbReference type="GO" id="GO:0005737">
    <property type="term" value="C:cytoplasm"/>
    <property type="evidence" value="ECO:0007669"/>
    <property type="project" value="UniProtKB-SubCell"/>
</dbReference>
<dbReference type="GO" id="GO:0008740">
    <property type="term" value="F:L-rhamnose isomerase activity"/>
    <property type="evidence" value="ECO:0007669"/>
    <property type="project" value="UniProtKB-UniRule"/>
</dbReference>
<dbReference type="GO" id="GO:0030145">
    <property type="term" value="F:manganese ion binding"/>
    <property type="evidence" value="ECO:0007669"/>
    <property type="project" value="UniProtKB-UniRule"/>
</dbReference>
<dbReference type="GO" id="GO:0019324">
    <property type="term" value="P:L-lyxose metabolic process"/>
    <property type="evidence" value="ECO:0007669"/>
    <property type="project" value="TreeGrafter"/>
</dbReference>
<dbReference type="GO" id="GO:0019301">
    <property type="term" value="P:rhamnose catabolic process"/>
    <property type="evidence" value="ECO:0007669"/>
    <property type="project" value="UniProtKB-UniRule"/>
</dbReference>
<dbReference type="FunFam" id="3.20.20.150:FF:000006">
    <property type="entry name" value="L-rhamnose isomerase"/>
    <property type="match status" value="1"/>
</dbReference>
<dbReference type="Gene3D" id="3.20.20.150">
    <property type="entry name" value="Divalent-metal-dependent TIM barrel enzymes"/>
    <property type="match status" value="1"/>
</dbReference>
<dbReference type="HAMAP" id="MF_00541">
    <property type="entry name" value="RhaA"/>
    <property type="match status" value="1"/>
</dbReference>
<dbReference type="InterPro" id="IPR050337">
    <property type="entry name" value="L-rhamnose_isomerase"/>
</dbReference>
<dbReference type="InterPro" id="IPR009308">
    <property type="entry name" value="Rhamnose_isomerase"/>
</dbReference>
<dbReference type="InterPro" id="IPR036237">
    <property type="entry name" value="Xyl_isomerase-like_sf"/>
</dbReference>
<dbReference type="NCBIfam" id="NF002203">
    <property type="entry name" value="PRK01076.1"/>
    <property type="match status" value="1"/>
</dbReference>
<dbReference type="NCBIfam" id="TIGR01748">
    <property type="entry name" value="rhaA"/>
    <property type="match status" value="1"/>
</dbReference>
<dbReference type="PANTHER" id="PTHR30268">
    <property type="entry name" value="L-RHAMNOSE ISOMERASE"/>
    <property type="match status" value="1"/>
</dbReference>
<dbReference type="PANTHER" id="PTHR30268:SF0">
    <property type="entry name" value="L-RHAMNOSE ISOMERASE"/>
    <property type="match status" value="1"/>
</dbReference>
<dbReference type="Pfam" id="PF06134">
    <property type="entry name" value="RhaA"/>
    <property type="match status" value="1"/>
</dbReference>
<dbReference type="SUPFAM" id="SSF51658">
    <property type="entry name" value="Xylose isomerase-like"/>
    <property type="match status" value="1"/>
</dbReference>
<sequence>MSTVQQAYELAKKQFADIGVDTEQALALLDQLPISMHCWQGDDVSGFEQGAGALSGGIQTTGNYPGKARTPQELRADLDKAVSLIPGKKRLNLHASYLEADHRVDRNEVKPEHFANWVAWAKANNMGLDFNPTYFSHPLSAEATLSHQNKEIRDFWIEHGKACRKISEYFGKELGTASVMNIWIPDGSKDFVVDKFAPRQRLVEALDEIIAEKIDAKYHLDAVESKLFGIGVESYTVGSNEFYAAYAVSRGTALCLDAGHFHPTEVISDKISAVMPFVQHLLLHVSRPVRWDSDHVVLLDDETQAIAGEIIRNQLFDRVHIGLDFFDASINRIAAWVIGTRNMQKALLRALLEPTDELRALENARDFGSRLALLEEQKSLPWQAVWDMYCERHNVPVGRRWLDEVRAYEKTVLSQRV</sequence>
<proteinExistence type="inferred from homology"/>
<comment type="function">
    <text evidence="1">Catalyzes the interconversion of L-rhamnose and L-rhamnulose.</text>
</comment>
<comment type="catalytic activity">
    <reaction evidence="1">
        <text>L-rhamnopyranose = L-rhamnulose</text>
        <dbReference type="Rhea" id="RHEA:23160"/>
        <dbReference type="ChEBI" id="CHEBI:17897"/>
        <dbReference type="ChEBI" id="CHEBI:62346"/>
        <dbReference type="EC" id="5.3.1.14"/>
    </reaction>
</comment>
<comment type="cofactor">
    <cofactor evidence="1">
        <name>Mn(2+)</name>
        <dbReference type="ChEBI" id="CHEBI:29035"/>
    </cofactor>
    <text evidence="1">Binds 1 Mn(2+) ion per subunit.</text>
</comment>
<comment type="pathway">
    <text evidence="1">Carbohydrate degradation; L-rhamnose degradation; glycerone phosphate from L-rhamnose: step 1/3.</text>
</comment>
<comment type="subcellular location">
    <subcellularLocation>
        <location evidence="1">Cytoplasm</location>
    </subcellularLocation>
</comment>
<comment type="similarity">
    <text evidence="1">Belongs to the rhamnose isomerase family.</text>
</comment>
<protein>
    <recommendedName>
        <fullName evidence="1">L-rhamnose isomerase</fullName>
        <ecNumber evidence="1">5.3.1.14</ecNumber>
    </recommendedName>
</protein>
<accession>Q65Q25</accession>
<organism>
    <name type="scientific">Mannheimia succiniciproducens (strain KCTC 0769BP / MBEL55E)</name>
    <dbReference type="NCBI Taxonomy" id="221988"/>
    <lineage>
        <taxon>Bacteria</taxon>
        <taxon>Pseudomonadati</taxon>
        <taxon>Pseudomonadota</taxon>
        <taxon>Gammaproteobacteria</taxon>
        <taxon>Pasteurellales</taxon>
        <taxon>Pasteurellaceae</taxon>
        <taxon>Basfia</taxon>
    </lineage>
</organism>
<gene>
    <name evidence="1" type="primary">rhaA</name>
    <name type="ordered locus">MS2328</name>
</gene>
<keyword id="KW-0963">Cytoplasm</keyword>
<keyword id="KW-0413">Isomerase</keyword>
<keyword id="KW-0464">Manganese</keyword>
<keyword id="KW-0479">Metal-binding</keyword>
<keyword id="KW-0684">Rhamnose metabolism</keyword>